<evidence type="ECO:0000250" key="1"/>
<evidence type="ECO:0000255" key="2">
    <source>
        <dbReference type="PROSITE-ProRule" id="PRU01210"/>
    </source>
</evidence>
<evidence type="ECO:0000305" key="3"/>
<protein>
    <recommendedName>
        <fullName>Toxin BmKaTx10</fullName>
    </recommendedName>
    <alternativeName>
        <fullName>Alpha-neurotoxin Tx10</fullName>
    </alternativeName>
    <alternativeName>
        <fullName>BmKalphaTx10</fullName>
    </alternativeName>
    <alternativeName>
        <fullName>Toxin KT2</fullName>
    </alternativeName>
</protein>
<organism>
    <name type="scientific">Olivierus martensii</name>
    <name type="common">Manchurian scorpion</name>
    <name type="synonym">Mesobuthus martensii</name>
    <dbReference type="NCBI Taxonomy" id="34649"/>
    <lineage>
        <taxon>Eukaryota</taxon>
        <taxon>Metazoa</taxon>
        <taxon>Ecdysozoa</taxon>
        <taxon>Arthropoda</taxon>
        <taxon>Chelicerata</taxon>
        <taxon>Arachnida</taxon>
        <taxon>Scorpiones</taxon>
        <taxon>Buthida</taxon>
        <taxon>Buthoidea</taxon>
        <taxon>Buthidae</taxon>
        <taxon>Olivierus</taxon>
    </lineage>
</organism>
<comment type="function">
    <text evidence="1">Alpha toxins bind voltage-independently at site-3 of sodium channels (Nav) and inhibit the inactivation of the activated channels, thereby blocking neuronal transmission.</text>
</comment>
<comment type="subcellular location">
    <subcellularLocation>
        <location>Secreted</location>
    </subcellularLocation>
</comment>
<comment type="tissue specificity">
    <text>Expressed by the venom gland.</text>
</comment>
<comment type="domain">
    <text evidence="3">Has the structural arrangement of an alpha-helix connected to antiparallel beta-sheets by disulfide bonds (CS-alpha/beta).</text>
</comment>
<comment type="similarity">
    <text evidence="3">Belongs to the long (4 C-C) scorpion toxin superfamily. Sodium channel inhibitor family. Alpha subfamily.</text>
</comment>
<name>SC10_OLIMR</name>
<reference key="1">
    <citation type="journal article" date="2000" name="Toxicon">
        <title>Nine novel precursors of Buthus martensii scorpion alpha-toxin homologues.</title>
        <authorList>
            <person name="Zhu S.-Y."/>
            <person name="Li W.-X."/>
            <person name="Zeng X.-C."/>
            <person name="Liu H."/>
            <person name="Jiang D.-H."/>
            <person name="Mao X."/>
        </authorList>
    </citation>
    <scope>NUCLEOTIDE SEQUENCE [MRNA]</scope>
    <source>
        <tissue>Venom gland</tissue>
    </source>
</reference>
<reference key="2">
    <citation type="submission" date="1999-05" db="EMBL/GenBank/DDBJ databases">
        <title>The precursor of a novel toxin KT2 active on sodium ion channel from Buthus martensii Karsch.</title>
        <authorList>
            <person name="Li W.-X."/>
            <person name="Zeng X.-C."/>
            <person name="Zhu S.-Y."/>
        </authorList>
    </citation>
    <scope>NUCLEOTIDE SEQUENCE [MRNA]</scope>
    <source>
        <tissue>Venom gland</tissue>
    </source>
</reference>
<reference key="3">
    <citation type="submission" date="1999-03" db="EMBL/GenBank/DDBJ databases">
        <authorList>
            <person name="Zhu S.-Y."/>
        </authorList>
    </citation>
    <scope>NUCLEOTIDE SEQUENCE [MRNA] OF 56-85</scope>
    <source>
        <tissue>Venom gland</tissue>
    </source>
</reference>
<feature type="signal peptide" evidence="1">
    <location>
        <begin position="1"/>
        <end position="19"/>
    </location>
</feature>
<feature type="chain" id="PRO_0000035244" description="Toxin BmKaTx10">
    <location>
        <begin position="20"/>
        <end position="85"/>
    </location>
</feature>
<feature type="domain" description="LCN-type CS-alpha/beta" evidence="2">
    <location>
        <begin position="21"/>
        <end position="83"/>
    </location>
</feature>
<feature type="disulfide bond" evidence="2">
    <location>
        <begin position="31"/>
        <end position="82"/>
    </location>
</feature>
<feature type="disulfide bond" evidence="2">
    <location>
        <begin position="35"/>
        <end position="55"/>
    </location>
</feature>
<feature type="disulfide bond" evidence="2">
    <location>
        <begin position="41"/>
        <end position="65"/>
    </location>
</feature>
<feature type="disulfide bond" evidence="2">
    <location>
        <begin position="45"/>
        <end position="67"/>
    </location>
</feature>
<keyword id="KW-1015">Disulfide bond</keyword>
<keyword id="KW-0872">Ion channel impairing toxin</keyword>
<keyword id="KW-0528">Neurotoxin</keyword>
<keyword id="KW-0964">Secreted</keyword>
<keyword id="KW-0732">Signal</keyword>
<keyword id="KW-0800">Toxin</keyword>
<keyword id="KW-0738">Voltage-gated sodium channel impairing toxin</keyword>
<accession>Q9NJC5</accession>
<accession>Q9NJP6</accession>
<proteinExistence type="evidence at transcript level"/>
<dbReference type="EMBL" id="AF156168">
    <property type="protein sequence ID" value="AAF29461.1"/>
    <property type="molecule type" value="mRNA"/>
</dbReference>
<dbReference type="EMBL" id="AF150011">
    <property type="protein sequence ID" value="AAM33225.1"/>
    <property type="molecule type" value="mRNA"/>
</dbReference>
<dbReference type="EMBL" id="AF132976">
    <property type="protein sequence ID" value="AAF31297.1"/>
    <property type="molecule type" value="mRNA"/>
</dbReference>
<dbReference type="SMR" id="Q9NJC5"/>
<dbReference type="GO" id="GO:0005576">
    <property type="term" value="C:extracellular region"/>
    <property type="evidence" value="ECO:0007669"/>
    <property type="project" value="UniProtKB-SubCell"/>
</dbReference>
<dbReference type="GO" id="GO:0019871">
    <property type="term" value="F:sodium channel inhibitor activity"/>
    <property type="evidence" value="ECO:0007669"/>
    <property type="project" value="InterPro"/>
</dbReference>
<dbReference type="GO" id="GO:0090729">
    <property type="term" value="F:toxin activity"/>
    <property type="evidence" value="ECO:0007669"/>
    <property type="project" value="UniProtKB-KW"/>
</dbReference>
<dbReference type="GO" id="GO:0006952">
    <property type="term" value="P:defense response"/>
    <property type="evidence" value="ECO:0007669"/>
    <property type="project" value="InterPro"/>
</dbReference>
<dbReference type="CDD" id="cd23106">
    <property type="entry name" value="neurotoxins_LC_scorpion"/>
    <property type="match status" value="1"/>
</dbReference>
<dbReference type="FunFam" id="3.30.30.10:FF:000002">
    <property type="entry name" value="Alpha-like toxin BmK-M1"/>
    <property type="match status" value="1"/>
</dbReference>
<dbReference type="Gene3D" id="3.30.30.10">
    <property type="entry name" value="Knottin, scorpion toxin-like"/>
    <property type="match status" value="1"/>
</dbReference>
<dbReference type="InterPro" id="IPR044062">
    <property type="entry name" value="LCN-type_CS_alpha_beta_dom"/>
</dbReference>
<dbReference type="InterPro" id="IPR003614">
    <property type="entry name" value="Scorpion_toxin-like"/>
</dbReference>
<dbReference type="InterPro" id="IPR036574">
    <property type="entry name" value="Scorpion_toxin-like_sf"/>
</dbReference>
<dbReference type="InterPro" id="IPR018218">
    <property type="entry name" value="Scorpion_toxinL"/>
</dbReference>
<dbReference type="InterPro" id="IPR002061">
    <property type="entry name" value="Scorpion_toxinL/defensin"/>
</dbReference>
<dbReference type="Pfam" id="PF00537">
    <property type="entry name" value="Toxin_3"/>
    <property type="match status" value="1"/>
</dbReference>
<dbReference type="PRINTS" id="PR00285">
    <property type="entry name" value="SCORPNTOXIN"/>
</dbReference>
<dbReference type="SMART" id="SM00505">
    <property type="entry name" value="Knot1"/>
    <property type="match status" value="1"/>
</dbReference>
<dbReference type="SUPFAM" id="SSF57095">
    <property type="entry name" value="Scorpion toxin-like"/>
    <property type="match status" value="1"/>
</dbReference>
<dbReference type="PROSITE" id="PS51863">
    <property type="entry name" value="LCN_CSAB"/>
    <property type="match status" value="1"/>
</dbReference>
<sequence>MNYLVMVSFALLLMTGVESVRDGYIALPHNCAYGCLLNEFCNDLCTKNGAKIGYCNIQGKYGNACWCIELPDNVPIRVPGRCHPS</sequence>